<proteinExistence type="inferred from homology"/>
<comment type="function">
    <text evidence="1">Together with the chaperonin GroEL, plays an essential role in assisting protein folding. The GroEL-GroES system forms a nano-cage that allows encapsulation of the non-native substrate proteins and provides a physical environment optimized to promote and accelerate protein folding. GroES binds to the apical surface of the GroEL ring, thereby capping the opening of the GroEL channel.</text>
</comment>
<comment type="subunit">
    <text evidence="1">Heptamer of 7 subunits arranged in a ring. Interacts with the chaperonin GroEL.</text>
</comment>
<comment type="subcellular location">
    <subcellularLocation>
        <location evidence="1">Cytoplasm</location>
    </subcellularLocation>
</comment>
<comment type="similarity">
    <text evidence="1">Belongs to the GroES chaperonin family.</text>
</comment>
<organism>
    <name type="scientific">Clostridium perfringens (strain SM101 / Type A)</name>
    <dbReference type="NCBI Taxonomy" id="289380"/>
    <lineage>
        <taxon>Bacteria</taxon>
        <taxon>Bacillati</taxon>
        <taxon>Bacillota</taxon>
        <taxon>Clostridia</taxon>
        <taxon>Eubacteriales</taxon>
        <taxon>Clostridiaceae</taxon>
        <taxon>Clostridium</taxon>
    </lineage>
</organism>
<accession>Q0SQQ6</accession>
<keyword id="KW-0143">Chaperone</keyword>
<keyword id="KW-0963">Cytoplasm</keyword>
<dbReference type="EMBL" id="CP000312">
    <property type="protein sequence ID" value="ABG87744.1"/>
    <property type="molecule type" value="Genomic_DNA"/>
</dbReference>
<dbReference type="RefSeq" id="WP_011593059.1">
    <property type="nucleotide sequence ID" value="NC_008262.1"/>
</dbReference>
<dbReference type="SMR" id="Q0SQQ6"/>
<dbReference type="KEGG" id="cpr:CPR_2276"/>
<dbReference type="Proteomes" id="UP000001824">
    <property type="component" value="Chromosome"/>
</dbReference>
<dbReference type="GO" id="GO:0005737">
    <property type="term" value="C:cytoplasm"/>
    <property type="evidence" value="ECO:0007669"/>
    <property type="project" value="UniProtKB-SubCell"/>
</dbReference>
<dbReference type="GO" id="GO:0005524">
    <property type="term" value="F:ATP binding"/>
    <property type="evidence" value="ECO:0007669"/>
    <property type="project" value="InterPro"/>
</dbReference>
<dbReference type="GO" id="GO:0046872">
    <property type="term" value="F:metal ion binding"/>
    <property type="evidence" value="ECO:0007669"/>
    <property type="project" value="TreeGrafter"/>
</dbReference>
<dbReference type="GO" id="GO:0044183">
    <property type="term" value="F:protein folding chaperone"/>
    <property type="evidence" value="ECO:0007669"/>
    <property type="project" value="InterPro"/>
</dbReference>
<dbReference type="GO" id="GO:0051087">
    <property type="term" value="F:protein-folding chaperone binding"/>
    <property type="evidence" value="ECO:0007669"/>
    <property type="project" value="TreeGrafter"/>
</dbReference>
<dbReference type="GO" id="GO:0051082">
    <property type="term" value="F:unfolded protein binding"/>
    <property type="evidence" value="ECO:0007669"/>
    <property type="project" value="TreeGrafter"/>
</dbReference>
<dbReference type="GO" id="GO:0051085">
    <property type="term" value="P:chaperone cofactor-dependent protein refolding"/>
    <property type="evidence" value="ECO:0007669"/>
    <property type="project" value="TreeGrafter"/>
</dbReference>
<dbReference type="CDD" id="cd00320">
    <property type="entry name" value="cpn10"/>
    <property type="match status" value="1"/>
</dbReference>
<dbReference type="FunFam" id="2.30.33.40:FF:000001">
    <property type="entry name" value="10 kDa chaperonin"/>
    <property type="match status" value="1"/>
</dbReference>
<dbReference type="Gene3D" id="2.30.33.40">
    <property type="entry name" value="GroES chaperonin"/>
    <property type="match status" value="1"/>
</dbReference>
<dbReference type="HAMAP" id="MF_00580">
    <property type="entry name" value="CH10"/>
    <property type="match status" value="1"/>
</dbReference>
<dbReference type="InterPro" id="IPR020818">
    <property type="entry name" value="Chaperonin_GroES"/>
</dbReference>
<dbReference type="InterPro" id="IPR037124">
    <property type="entry name" value="Chaperonin_GroES_sf"/>
</dbReference>
<dbReference type="InterPro" id="IPR018369">
    <property type="entry name" value="Chaprnonin_Cpn10_CS"/>
</dbReference>
<dbReference type="InterPro" id="IPR011032">
    <property type="entry name" value="GroES-like_sf"/>
</dbReference>
<dbReference type="NCBIfam" id="NF001530">
    <property type="entry name" value="PRK00364.1-6"/>
    <property type="match status" value="1"/>
</dbReference>
<dbReference type="NCBIfam" id="NF001531">
    <property type="entry name" value="PRK00364.2-2"/>
    <property type="match status" value="1"/>
</dbReference>
<dbReference type="NCBIfam" id="NF001533">
    <property type="entry name" value="PRK00364.2-4"/>
    <property type="match status" value="1"/>
</dbReference>
<dbReference type="NCBIfam" id="NF001534">
    <property type="entry name" value="PRK00364.2-5"/>
    <property type="match status" value="1"/>
</dbReference>
<dbReference type="PANTHER" id="PTHR10772">
    <property type="entry name" value="10 KDA HEAT SHOCK PROTEIN"/>
    <property type="match status" value="1"/>
</dbReference>
<dbReference type="PANTHER" id="PTHR10772:SF58">
    <property type="entry name" value="CO-CHAPERONIN GROES"/>
    <property type="match status" value="1"/>
</dbReference>
<dbReference type="Pfam" id="PF00166">
    <property type="entry name" value="Cpn10"/>
    <property type="match status" value="1"/>
</dbReference>
<dbReference type="PRINTS" id="PR00297">
    <property type="entry name" value="CHAPERONIN10"/>
</dbReference>
<dbReference type="SMART" id="SM00883">
    <property type="entry name" value="Cpn10"/>
    <property type="match status" value="1"/>
</dbReference>
<dbReference type="SUPFAM" id="SSF50129">
    <property type="entry name" value="GroES-like"/>
    <property type="match status" value="1"/>
</dbReference>
<dbReference type="PROSITE" id="PS00681">
    <property type="entry name" value="CHAPERONINS_CPN10"/>
    <property type="match status" value="1"/>
</dbReference>
<feature type="chain" id="PRO_1000025242" description="Co-chaperonin GroES">
    <location>
        <begin position="1"/>
        <end position="94"/>
    </location>
</feature>
<name>CH10_CLOPS</name>
<reference key="1">
    <citation type="journal article" date="2006" name="Genome Res.">
        <title>Skewed genomic variability in strains of the toxigenic bacterial pathogen, Clostridium perfringens.</title>
        <authorList>
            <person name="Myers G.S.A."/>
            <person name="Rasko D.A."/>
            <person name="Cheung J.K."/>
            <person name="Ravel J."/>
            <person name="Seshadri R."/>
            <person name="DeBoy R.T."/>
            <person name="Ren Q."/>
            <person name="Varga J."/>
            <person name="Awad M.M."/>
            <person name="Brinkac L.M."/>
            <person name="Daugherty S.C."/>
            <person name="Haft D.H."/>
            <person name="Dodson R.J."/>
            <person name="Madupu R."/>
            <person name="Nelson W.C."/>
            <person name="Rosovitz M.J."/>
            <person name="Sullivan S.A."/>
            <person name="Khouri H."/>
            <person name="Dimitrov G.I."/>
            <person name="Watkins K.L."/>
            <person name="Mulligan S."/>
            <person name="Benton J."/>
            <person name="Radune D."/>
            <person name="Fisher D.J."/>
            <person name="Atkins H.S."/>
            <person name="Hiscox T."/>
            <person name="Jost B.H."/>
            <person name="Billington S.J."/>
            <person name="Songer J.G."/>
            <person name="McClane B.A."/>
            <person name="Titball R.W."/>
            <person name="Rood J.I."/>
            <person name="Melville S.B."/>
            <person name="Paulsen I.T."/>
        </authorList>
    </citation>
    <scope>NUCLEOTIDE SEQUENCE [LARGE SCALE GENOMIC DNA]</scope>
    <source>
        <strain>SM101 / Type A</strain>
    </source>
</reference>
<gene>
    <name evidence="1" type="primary">groES</name>
    <name evidence="1" type="synonym">groS</name>
    <name type="ordered locus">CPR_2276</name>
</gene>
<protein>
    <recommendedName>
        <fullName evidence="1">Co-chaperonin GroES</fullName>
    </recommendedName>
    <alternativeName>
        <fullName evidence="1">10 kDa chaperonin</fullName>
    </alternativeName>
    <alternativeName>
        <fullName evidence="1">Chaperonin-10</fullName>
        <shortName evidence="1">Cpn10</shortName>
    </alternativeName>
</protein>
<evidence type="ECO:0000255" key="1">
    <source>
        <dbReference type="HAMAP-Rule" id="MF_00580"/>
    </source>
</evidence>
<sequence length="94" mass="10322">MSIKPLGDRVVIKRLEAEETTKSGIIVTGTAKERPQEAEVVAVGPGAIIDGKRTEMEVKIGDKVLYSKYAGTEVKFEGEEYTILRQDDILAIVE</sequence>